<organism>
    <name type="scientific">Homo sapiens</name>
    <name type="common">Human</name>
    <dbReference type="NCBI Taxonomy" id="9606"/>
    <lineage>
        <taxon>Eukaryota</taxon>
        <taxon>Metazoa</taxon>
        <taxon>Chordata</taxon>
        <taxon>Craniata</taxon>
        <taxon>Vertebrata</taxon>
        <taxon>Euteleostomi</taxon>
        <taxon>Mammalia</taxon>
        <taxon>Eutheria</taxon>
        <taxon>Euarchontoglires</taxon>
        <taxon>Primates</taxon>
        <taxon>Haplorrhini</taxon>
        <taxon>Catarrhini</taxon>
        <taxon>Hominidae</taxon>
        <taxon>Homo</taxon>
    </lineage>
</organism>
<proteinExistence type="evidence at protein level"/>
<sequence length="650" mass="72203">MAGARAAAAAASAGSSASSGNQPPQELGLGELLEEFSRTQYRAKDGSGTGGSKVERIEKRCLELFGRDYCFSVIPNTNGDICGHYPRHIVFLEYESSEKEKDTFESTVQVSKLQDLIHRSKMARCRGRFVCPVILFKGKHICRSATLAGWGELYGRSGYNYFFSGGADDAWADVEDVTEEDCALRSGDTHLFDKVRGYDIKLLRYLSVKYICDLMVENKKVKFGMNVTSSEKVDKAQRYADFTLLSIPYPGCEFFKEYKDRDYMAEGLIFNWKQDYVDAPLSIPDFLTHSLNIDWSQYQCWDLVQQTQNYLKLLLSLVNSDDDSGLLVHCISGWDRTPLFISLLRLSLWADGLIHTSLKPTEILYLTVAYDWFLFGHMLVDRLSKGEEIFFFCFNFLKHITSEEFSALKTQRRKSLPARDGGFTLEDICMLRRKDRGSTTSLGSDFSLVMESSPGATGSFTYEAVELVPAGAPTQAAWRKSHSSSPQSVLWNRPQPSEDRLPSQQGLAEARSSSSSSSNHSDNFFRMGSSPLEVPKPRSVDHPLPGSSLSTDYGSWQMVTGCGSIQERAVLHTDSSLPFSFPDELPNSCLLAALSDRETRLQEVRSAFLAAYSSTVGLRAVAPSPSGAIGGLLEQFARGVGLRSISSNAL</sequence>
<protein>
    <recommendedName>
        <fullName evidence="11">Phosphatidylinositol-3,5-bisphosphate 3-phosphatase MTMR14</fullName>
        <ecNumber evidence="4">3.1.3.95</ecNumber>
    </recommendedName>
    <alternativeName>
        <fullName evidence="9">HCV NS5A-transactivated protein 4 splice variant A-binding protein 1</fullName>
        <shortName evidence="9">NS5ATP4ABP1</shortName>
    </alternativeName>
    <alternativeName>
        <fullName evidence="12">Myotubularin-related protein 14</fullName>
    </alternativeName>
    <alternativeName>
        <fullName evidence="11">Phosphatidylinositol-3-phosphate phosphatase</fullName>
    </alternativeName>
    <alternativeName>
        <fullName evidence="7">hJumpy</fullName>
    </alternativeName>
</protein>
<comment type="function">
    <text evidence="4">Lipid phosphatase that specifically dephosphorylates the D-3 position of phosphatidylinositol 3-phosphate and phosphatidylinositol 3,5-bisphosphate, generating phosphatidylinositol and phosphatidylinositol 5-phosphate.</text>
</comment>
<comment type="catalytic activity">
    <reaction evidence="4">
        <text>a 1,2-diacyl-sn-glycero-3-phospho-(1D-myo-inositol-3,5-bisphosphate) + H2O = a 1,2-diacyl-sn-glycero-3-phospho-(1D-myo-inositol-5-phosphate) + phosphate</text>
        <dbReference type="Rhea" id="RHEA:39019"/>
        <dbReference type="ChEBI" id="CHEBI:15377"/>
        <dbReference type="ChEBI" id="CHEBI:43474"/>
        <dbReference type="ChEBI" id="CHEBI:57795"/>
        <dbReference type="ChEBI" id="CHEBI:57923"/>
        <dbReference type="EC" id="3.1.3.95"/>
    </reaction>
</comment>
<comment type="catalytic activity">
    <reaction evidence="4">
        <text>a 1,2-diacyl-sn-glycero-3-phospho-(1D-myo-inositol-3-phosphate) + H2O = a 1,2-diacyl-sn-glycero-3-phospho-(1D-myo-inositol) + phosphate</text>
        <dbReference type="Rhea" id="RHEA:12316"/>
        <dbReference type="ChEBI" id="CHEBI:15377"/>
        <dbReference type="ChEBI" id="CHEBI:43474"/>
        <dbReference type="ChEBI" id="CHEBI:57880"/>
        <dbReference type="ChEBI" id="CHEBI:58088"/>
    </reaction>
</comment>
<comment type="interaction">
    <interactant intactId="EBI-5658424">
        <id>Q8NCE2</id>
    </interactant>
    <interactant intactId="EBI-11952721">
        <id>Q05BL1</id>
        <label>TP53BP2</label>
    </interactant>
    <organismsDiffer>false</organismsDiffer>
    <experiments>3</experiments>
</comment>
<comment type="interaction">
    <interactant intactId="EBI-5658424">
        <id>Q8NCE2</id>
    </interactant>
    <interactant intactId="EBI-10175039">
        <id>Q13625-3</id>
        <label>TP53BP2</label>
    </interactant>
    <organismsDiffer>false</organismsDiffer>
    <experiments>3</experiments>
</comment>
<comment type="subcellular location">
    <subcellularLocation>
        <location evidence="4">Cytoplasm</location>
    </subcellularLocation>
    <text evidence="4">Found in reticular structures and plasma membrane ruffles. Concentrated near the nucleus.</text>
</comment>
<comment type="alternative products">
    <event type="alternative splicing"/>
    <isoform>
        <id>Q8NCE2-1</id>
        <name>1</name>
        <sequence type="displayed"/>
    </isoform>
    <isoform>
        <id>Q8NCE2-2</id>
        <name>2</name>
        <sequence type="described" ref="VSP_021586"/>
    </isoform>
    <isoform>
        <id>Q8NCE2-3</id>
        <name>3</name>
        <sequence type="described" ref="VSP_021585 VSP_021586"/>
    </isoform>
</comment>
<comment type="tissue specificity">
    <text evidence="4">Expressed in various tissues, including heart, skeletal muscle, placenta, liver, lung, kidney and pancreas.</text>
</comment>
<comment type="disease" evidence="4">
    <disease id="DI-00252">
        <name>Myopathy, centronuclear, 1</name>
        <acronym>CNM1</acronym>
        <description>A congenital muscle disorder characterized by progressive muscular weakness and wasting involving mainly limb girdle, trunk, and neck muscles. It may also affect distal muscles. Weakness may be present during childhood or adolescence or may not become evident until the third decade of life. Ptosis is a frequent clinical feature. The most prominent histopathologic features include high frequency of centrally located nuclei in muscle fibers not secondary to regeneration, radial arrangement of sarcoplasmic strands around the central nuclei, and predominance and hypotrophy of type 1 fibers.</description>
        <dbReference type="MIM" id="160150"/>
    </disease>
    <text evidence="4">The gene represented in this entry may act as a disease modifier. MTMR14 mutations affecting enzymatic function have been found in sporadic cases of centronuclear myopathy, one of them carrying a disease-associated mutation in DNM2 (PubMed:17008356). This raises the possibility of MTMR14 being a modifier of the phenotype in some cases of centronuclear myopathy (PubMed:17008356).</text>
</comment>
<comment type="similarity">
    <text evidence="10">Belongs to the protein-tyrosine phosphatase family. Non-receptor class myotubularin subfamily.</text>
</comment>
<comment type="sequence caution" evidence="10">
    <conflict type="erroneous initiation">
        <sequence resource="EMBL-CDS" id="BAB15340"/>
    </conflict>
</comment>
<evidence type="ECO:0000250" key="1">
    <source>
        <dbReference type="UniProtKB" id="Q13614"/>
    </source>
</evidence>
<evidence type="ECO:0000255" key="2"/>
<evidence type="ECO:0000256" key="3">
    <source>
        <dbReference type="SAM" id="MobiDB-lite"/>
    </source>
</evidence>
<evidence type="ECO:0000269" key="4">
    <source>
    </source>
</evidence>
<evidence type="ECO:0000303" key="5">
    <source>
    </source>
</evidence>
<evidence type="ECO:0000303" key="6">
    <source>
    </source>
</evidence>
<evidence type="ECO:0000303" key="7">
    <source>
    </source>
</evidence>
<evidence type="ECO:0000303" key="8">
    <source>
    </source>
</evidence>
<evidence type="ECO:0000303" key="9">
    <source ref="1"/>
</evidence>
<evidence type="ECO:0000305" key="10"/>
<evidence type="ECO:0000305" key="11">
    <source>
    </source>
</evidence>
<evidence type="ECO:0000312" key="12">
    <source>
        <dbReference type="HGNC" id="HGNC:26190"/>
    </source>
</evidence>
<evidence type="ECO:0007744" key="13">
    <source>
    </source>
</evidence>
<evidence type="ECO:0007744" key="14">
    <source>
    </source>
</evidence>
<evidence type="ECO:0007744" key="15">
    <source>
    </source>
</evidence>
<evidence type="ECO:0007744" key="16">
    <source>
    </source>
</evidence>
<keyword id="KW-0007">Acetylation</keyword>
<keyword id="KW-0025">Alternative splicing</keyword>
<keyword id="KW-0963">Cytoplasm</keyword>
<keyword id="KW-0225">Disease variant</keyword>
<keyword id="KW-0325">Glycoprotein</keyword>
<keyword id="KW-0378">Hydrolase</keyword>
<keyword id="KW-0488">Methylation</keyword>
<keyword id="KW-0597">Phosphoprotein</keyword>
<keyword id="KW-1267">Proteomics identification</keyword>
<keyword id="KW-1185">Reference proteome</keyword>
<accession>Q8NCE2</accession>
<accession>Q0JTH5</accession>
<accession>Q0JU83</accession>
<accession>Q6PIZ4</accession>
<accession>Q6QE21</accession>
<accession>Q86VK9</accession>
<accession>Q8IYK1</accession>
<accession>Q8TCM7</accession>
<accession>Q9H6C0</accession>
<gene>
    <name evidence="12" type="primary">MTMR14</name>
    <name evidence="12" type="synonym">C3orf29</name>
</gene>
<dbReference type="EC" id="3.1.3.95" evidence="4"/>
<dbReference type="EMBL" id="DQ630520">
    <property type="protein sequence ID" value="ABG02221.1"/>
    <property type="molecule type" value="mRNA"/>
</dbReference>
<dbReference type="EMBL" id="AK026058">
    <property type="protein sequence ID" value="BAB15340.1"/>
    <property type="status" value="ALT_INIT"/>
    <property type="molecule type" value="mRNA"/>
</dbReference>
<dbReference type="EMBL" id="AK074792">
    <property type="protein sequence ID" value="BAC11211.1"/>
    <property type="molecule type" value="mRNA"/>
</dbReference>
<dbReference type="EMBL" id="AL713695">
    <property type="protein sequence ID" value="CAD28494.1"/>
    <property type="molecule type" value="mRNA"/>
</dbReference>
<dbReference type="EMBL" id="AM393309">
    <property type="protein sequence ID" value="CAL38187.1"/>
    <property type="molecule type" value="mRNA"/>
</dbReference>
<dbReference type="EMBL" id="AM393050">
    <property type="protein sequence ID" value="CAL37928.1"/>
    <property type="molecule type" value="mRNA"/>
</dbReference>
<dbReference type="EMBL" id="BC001674">
    <property type="protein sequence ID" value="AAH01674.2"/>
    <property type="molecule type" value="mRNA"/>
</dbReference>
<dbReference type="EMBL" id="BC025952">
    <property type="protein sequence ID" value="AAH25952.2"/>
    <property type="molecule type" value="mRNA"/>
</dbReference>
<dbReference type="EMBL" id="BC035690">
    <property type="protein sequence ID" value="AAH35690.1"/>
    <property type="molecule type" value="mRNA"/>
</dbReference>
<dbReference type="EMBL" id="BC050626">
    <property type="protein sequence ID" value="AAH50626.1"/>
    <property type="molecule type" value="mRNA"/>
</dbReference>
<dbReference type="EMBL" id="AY545552">
    <property type="protein sequence ID" value="AAS50151.1"/>
    <property type="molecule type" value="mRNA"/>
</dbReference>
<dbReference type="CCDS" id="CCDS43043.1">
    <molecule id="Q8NCE2-1"/>
</dbReference>
<dbReference type="CCDS" id="CCDS43044.1">
    <molecule id="Q8NCE2-2"/>
</dbReference>
<dbReference type="CCDS" id="CCDS43045.1">
    <molecule id="Q8NCE2-3"/>
</dbReference>
<dbReference type="RefSeq" id="NP_001070993.1">
    <molecule id="Q8NCE2-1"/>
    <property type="nucleotide sequence ID" value="NM_001077525.3"/>
</dbReference>
<dbReference type="RefSeq" id="NP_001070994.1">
    <molecule id="Q8NCE2-2"/>
    <property type="nucleotide sequence ID" value="NM_001077526.3"/>
</dbReference>
<dbReference type="RefSeq" id="NP_071930.2">
    <molecule id="Q8NCE2-3"/>
    <property type="nucleotide sequence ID" value="NM_022485.5"/>
</dbReference>
<dbReference type="BioGRID" id="122168">
    <property type="interactions" value="123"/>
</dbReference>
<dbReference type="FunCoup" id="Q8NCE2">
    <property type="interactions" value="1669"/>
</dbReference>
<dbReference type="IntAct" id="Q8NCE2">
    <property type="interactions" value="49"/>
</dbReference>
<dbReference type="MINT" id="Q8NCE2"/>
<dbReference type="STRING" id="9606.ENSP00000296003"/>
<dbReference type="DEPOD" id="MTMR14"/>
<dbReference type="GlyCosmos" id="Q8NCE2">
    <property type="glycosylation" value="2 sites, No reported glycans"/>
</dbReference>
<dbReference type="GlyGen" id="Q8NCE2">
    <property type="glycosylation" value="2 sites, 1 N-linked glycan (1 site)"/>
</dbReference>
<dbReference type="iPTMnet" id="Q8NCE2"/>
<dbReference type="PhosphoSitePlus" id="Q8NCE2"/>
<dbReference type="BioMuta" id="MTMR14"/>
<dbReference type="DMDM" id="118568016"/>
<dbReference type="jPOST" id="Q8NCE2"/>
<dbReference type="MassIVE" id="Q8NCE2"/>
<dbReference type="PaxDb" id="9606-ENSP00000296003"/>
<dbReference type="PeptideAtlas" id="Q8NCE2"/>
<dbReference type="ProteomicsDB" id="72881">
    <molecule id="Q8NCE2-1"/>
</dbReference>
<dbReference type="ProteomicsDB" id="72882">
    <molecule id="Q8NCE2-2"/>
</dbReference>
<dbReference type="ProteomicsDB" id="72883">
    <molecule id="Q8NCE2-3"/>
</dbReference>
<dbReference type="Pumba" id="Q8NCE2"/>
<dbReference type="Antibodypedia" id="25426">
    <property type="antibodies" value="274 antibodies from 26 providers"/>
</dbReference>
<dbReference type="DNASU" id="64419"/>
<dbReference type="Ensembl" id="ENST00000296003.9">
    <molecule id="Q8NCE2-1"/>
    <property type="protein sequence ID" value="ENSP00000296003.5"/>
    <property type="gene ID" value="ENSG00000163719.20"/>
</dbReference>
<dbReference type="Ensembl" id="ENST00000351233.9">
    <molecule id="Q8NCE2-3"/>
    <property type="protein sequence ID" value="ENSP00000334070.7"/>
    <property type="gene ID" value="ENSG00000163719.20"/>
</dbReference>
<dbReference type="Ensembl" id="ENST00000353332.9">
    <molecule id="Q8NCE2-2"/>
    <property type="protein sequence ID" value="ENSP00000323462.8"/>
    <property type="gene ID" value="ENSG00000163719.20"/>
</dbReference>
<dbReference type="GeneID" id="64419"/>
<dbReference type="KEGG" id="hsa:64419"/>
<dbReference type="MANE-Select" id="ENST00000296003.9">
    <property type="protein sequence ID" value="ENSP00000296003.5"/>
    <property type="RefSeq nucleotide sequence ID" value="NM_001077525.3"/>
    <property type="RefSeq protein sequence ID" value="NP_001070993.1"/>
</dbReference>
<dbReference type="UCSC" id="uc003brz.4">
    <molecule id="Q8NCE2-1"/>
    <property type="organism name" value="human"/>
</dbReference>
<dbReference type="AGR" id="HGNC:26190"/>
<dbReference type="CTD" id="64419"/>
<dbReference type="DisGeNET" id="64419"/>
<dbReference type="GeneCards" id="MTMR14"/>
<dbReference type="HGNC" id="HGNC:26190">
    <property type="gene designation" value="MTMR14"/>
</dbReference>
<dbReference type="HPA" id="ENSG00000163719">
    <property type="expression patterns" value="Low tissue specificity"/>
</dbReference>
<dbReference type="MalaCards" id="MTMR14"/>
<dbReference type="MIM" id="160150">
    <property type="type" value="phenotype"/>
</dbReference>
<dbReference type="MIM" id="611089">
    <property type="type" value="gene"/>
</dbReference>
<dbReference type="neXtProt" id="NX_Q8NCE2"/>
<dbReference type="OpenTargets" id="ENSG00000163719"/>
<dbReference type="Orphanet" id="169189">
    <property type="disease" value="Autosomal dominant centronuclear myopathy"/>
</dbReference>
<dbReference type="PharmGKB" id="PA162396265"/>
<dbReference type="VEuPathDB" id="HostDB:ENSG00000163719"/>
<dbReference type="eggNOG" id="ENOG502QQ9R">
    <property type="taxonomic scope" value="Eukaryota"/>
</dbReference>
<dbReference type="GeneTree" id="ENSGT00390000018852"/>
<dbReference type="HOGENOM" id="CLU_016325_2_0_1"/>
<dbReference type="InParanoid" id="Q8NCE2"/>
<dbReference type="OMA" id="CALKTHR"/>
<dbReference type="OrthoDB" id="2408718at2759"/>
<dbReference type="PAN-GO" id="Q8NCE2">
    <property type="GO annotations" value="1 GO annotation based on evolutionary models"/>
</dbReference>
<dbReference type="PhylomeDB" id="Q8NCE2"/>
<dbReference type="TreeFam" id="TF324044"/>
<dbReference type="BioCyc" id="MetaCyc:HS08920-MONOMER"/>
<dbReference type="BRENDA" id="3.1.3.64">
    <property type="organism ID" value="2681"/>
</dbReference>
<dbReference type="PathwayCommons" id="Q8NCE2"/>
<dbReference type="Reactome" id="R-HSA-1632852">
    <property type="pathway name" value="Macroautophagy"/>
</dbReference>
<dbReference type="Reactome" id="R-HSA-1660499">
    <property type="pathway name" value="Synthesis of PIPs at the plasma membrane"/>
</dbReference>
<dbReference type="SignaLink" id="Q8NCE2"/>
<dbReference type="BioGRID-ORCS" id="64419">
    <property type="hits" value="10 hits in 1179 CRISPR screens"/>
</dbReference>
<dbReference type="ChiTaRS" id="MTMR14">
    <property type="organism name" value="human"/>
</dbReference>
<dbReference type="GeneWiki" id="MTMR14"/>
<dbReference type="GenomeRNAi" id="64419"/>
<dbReference type="Pharos" id="Q8NCE2">
    <property type="development level" value="Tbio"/>
</dbReference>
<dbReference type="PRO" id="PR:Q8NCE2"/>
<dbReference type="Proteomes" id="UP000005640">
    <property type="component" value="Chromosome 3"/>
</dbReference>
<dbReference type="RNAct" id="Q8NCE2">
    <property type="molecule type" value="protein"/>
</dbReference>
<dbReference type="Bgee" id="ENSG00000163719">
    <property type="expression patterns" value="Expressed in monocyte and 192 other cell types or tissues"/>
</dbReference>
<dbReference type="ExpressionAtlas" id="Q8NCE2">
    <property type="expression patterns" value="baseline and differential"/>
</dbReference>
<dbReference type="GO" id="GO:0005829">
    <property type="term" value="C:cytosol"/>
    <property type="evidence" value="ECO:0000304"/>
    <property type="project" value="Reactome"/>
</dbReference>
<dbReference type="GO" id="GO:0048471">
    <property type="term" value="C:perinuclear region of cytoplasm"/>
    <property type="evidence" value="ECO:0000314"/>
    <property type="project" value="UniProtKB"/>
</dbReference>
<dbReference type="GO" id="GO:0001726">
    <property type="term" value="C:ruffle"/>
    <property type="evidence" value="ECO:0000314"/>
    <property type="project" value="UniProtKB"/>
</dbReference>
<dbReference type="GO" id="GO:0052629">
    <property type="term" value="F:phosphatidylinositol-3,5-bisphosphate 3-phosphatase activity"/>
    <property type="evidence" value="ECO:0000314"/>
    <property type="project" value="UniProtKB"/>
</dbReference>
<dbReference type="GO" id="GO:0004438">
    <property type="term" value="F:phosphatidylinositol-3-phosphate phosphatase activity"/>
    <property type="evidence" value="ECO:0000314"/>
    <property type="project" value="UniProtKB"/>
</dbReference>
<dbReference type="GO" id="GO:0004722">
    <property type="term" value="F:protein serine/threonine phosphatase activity"/>
    <property type="evidence" value="ECO:0000304"/>
    <property type="project" value="Reactome"/>
</dbReference>
<dbReference type="GO" id="GO:0016236">
    <property type="term" value="P:macroautophagy"/>
    <property type="evidence" value="ECO:0000304"/>
    <property type="project" value="Reactome"/>
</dbReference>
<dbReference type="GO" id="GO:0006661">
    <property type="term" value="P:phosphatidylinositol biosynthetic process"/>
    <property type="evidence" value="ECO:0000304"/>
    <property type="project" value="Reactome"/>
</dbReference>
<dbReference type="CDD" id="cd13213">
    <property type="entry name" value="PH-GRAM_MTMR14"/>
    <property type="match status" value="1"/>
</dbReference>
<dbReference type="Gene3D" id="3.90.190.10">
    <property type="entry name" value="Protein tyrosine phosphatase superfamily"/>
    <property type="match status" value="1"/>
</dbReference>
<dbReference type="InterPro" id="IPR039802">
    <property type="entry name" value="MTMR14"/>
</dbReference>
<dbReference type="InterPro" id="IPR039803">
    <property type="entry name" value="MTMR14_PH-GRAM"/>
</dbReference>
<dbReference type="InterPro" id="IPR029021">
    <property type="entry name" value="Prot-tyrosine_phosphatase-like"/>
</dbReference>
<dbReference type="InterPro" id="IPR016130">
    <property type="entry name" value="Tyr_Pase_AS"/>
</dbReference>
<dbReference type="PANTHER" id="PTHR13524">
    <property type="entry name" value="MYOTUBULARIN-RELATED"/>
    <property type="match status" value="1"/>
</dbReference>
<dbReference type="PANTHER" id="PTHR13524:SF2">
    <property type="entry name" value="MYOTUBULARIN-RELATED PROTEIN 14"/>
    <property type="match status" value="1"/>
</dbReference>
<dbReference type="SUPFAM" id="SSF52799">
    <property type="entry name" value="(Phosphotyrosine protein) phosphatases II"/>
    <property type="match status" value="1"/>
</dbReference>
<reference key="1">
    <citation type="submission" date="2006-05" db="EMBL/GenBank/DDBJ databases">
        <title>Screening and cloning of interaction protein 1 of HCV NS5A-transactivated protein 4 splice variant A.</title>
        <authorList>
            <person name="Chen L.D."/>
            <person name="Cheng J."/>
            <person name="Wang Q."/>
            <person name="Hong Y."/>
            <person name="Zhang L.F."/>
            <person name="Han L."/>
            <person name="Yuan J."/>
        </authorList>
    </citation>
    <scope>NUCLEOTIDE SEQUENCE [MRNA] (ISOFORM 2)</scope>
</reference>
<reference key="2">
    <citation type="journal article" date="2004" name="Nat. Genet.">
        <title>Complete sequencing and characterization of 21,243 full-length human cDNAs.</title>
        <authorList>
            <person name="Ota T."/>
            <person name="Suzuki Y."/>
            <person name="Nishikawa T."/>
            <person name="Otsuki T."/>
            <person name="Sugiyama T."/>
            <person name="Irie R."/>
            <person name="Wakamatsu A."/>
            <person name="Hayashi K."/>
            <person name="Sato H."/>
            <person name="Nagai K."/>
            <person name="Kimura K."/>
            <person name="Makita H."/>
            <person name="Sekine M."/>
            <person name="Obayashi M."/>
            <person name="Nishi T."/>
            <person name="Shibahara T."/>
            <person name="Tanaka T."/>
            <person name="Ishii S."/>
            <person name="Yamamoto J."/>
            <person name="Saito K."/>
            <person name="Kawai Y."/>
            <person name="Isono Y."/>
            <person name="Nakamura Y."/>
            <person name="Nagahari K."/>
            <person name="Murakami K."/>
            <person name="Yasuda T."/>
            <person name="Iwayanagi T."/>
            <person name="Wagatsuma M."/>
            <person name="Shiratori A."/>
            <person name="Sudo H."/>
            <person name="Hosoiri T."/>
            <person name="Kaku Y."/>
            <person name="Kodaira H."/>
            <person name="Kondo H."/>
            <person name="Sugawara M."/>
            <person name="Takahashi M."/>
            <person name="Kanda K."/>
            <person name="Yokoi T."/>
            <person name="Furuya T."/>
            <person name="Kikkawa E."/>
            <person name="Omura Y."/>
            <person name="Abe K."/>
            <person name="Kamihara K."/>
            <person name="Katsuta N."/>
            <person name="Sato K."/>
            <person name="Tanikawa M."/>
            <person name="Yamazaki M."/>
            <person name="Ninomiya K."/>
            <person name="Ishibashi T."/>
            <person name="Yamashita H."/>
            <person name="Murakawa K."/>
            <person name="Fujimori K."/>
            <person name="Tanai H."/>
            <person name="Kimata M."/>
            <person name="Watanabe M."/>
            <person name="Hiraoka S."/>
            <person name="Chiba Y."/>
            <person name="Ishida S."/>
            <person name="Ono Y."/>
            <person name="Takiguchi S."/>
            <person name="Watanabe S."/>
            <person name="Yosida M."/>
            <person name="Hotuta T."/>
            <person name="Kusano J."/>
            <person name="Kanehori K."/>
            <person name="Takahashi-Fujii A."/>
            <person name="Hara H."/>
            <person name="Tanase T.-O."/>
            <person name="Nomura Y."/>
            <person name="Togiya S."/>
            <person name="Komai F."/>
            <person name="Hara R."/>
            <person name="Takeuchi K."/>
            <person name="Arita M."/>
            <person name="Imose N."/>
            <person name="Musashino K."/>
            <person name="Yuuki H."/>
            <person name="Oshima A."/>
            <person name="Sasaki N."/>
            <person name="Aotsuka S."/>
            <person name="Yoshikawa Y."/>
            <person name="Matsunawa H."/>
            <person name="Ichihara T."/>
            <person name="Shiohata N."/>
            <person name="Sano S."/>
            <person name="Moriya S."/>
            <person name="Momiyama H."/>
            <person name="Satoh N."/>
            <person name="Takami S."/>
            <person name="Terashima Y."/>
            <person name="Suzuki O."/>
            <person name="Nakagawa S."/>
            <person name="Senoh A."/>
            <person name="Mizoguchi H."/>
            <person name="Goto Y."/>
            <person name="Shimizu F."/>
            <person name="Wakebe H."/>
            <person name="Hishigaki H."/>
            <person name="Watanabe T."/>
            <person name="Sugiyama A."/>
            <person name="Takemoto M."/>
            <person name="Kawakami B."/>
            <person name="Yamazaki M."/>
            <person name="Watanabe K."/>
            <person name="Kumagai A."/>
            <person name="Itakura S."/>
            <person name="Fukuzumi Y."/>
            <person name="Fujimori Y."/>
            <person name="Komiyama M."/>
            <person name="Tashiro H."/>
            <person name="Tanigami A."/>
            <person name="Fujiwara T."/>
            <person name="Ono T."/>
            <person name="Yamada K."/>
            <person name="Fujii Y."/>
            <person name="Ozaki K."/>
            <person name="Hirao M."/>
            <person name="Ohmori Y."/>
            <person name="Kawabata A."/>
            <person name="Hikiji T."/>
            <person name="Kobatake N."/>
            <person name="Inagaki H."/>
            <person name="Ikema Y."/>
            <person name="Okamoto S."/>
            <person name="Okitani R."/>
            <person name="Kawakami T."/>
            <person name="Noguchi S."/>
            <person name="Itoh T."/>
            <person name="Shigeta K."/>
            <person name="Senba T."/>
            <person name="Matsumura K."/>
            <person name="Nakajima Y."/>
            <person name="Mizuno T."/>
            <person name="Morinaga M."/>
            <person name="Sasaki M."/>
            <person name="Togashi T."/>
            <person name="Oyama M."/>
            <person name="Hata H."/>
            <person name="Watanabe M."/>
            <person name="Komatsu T."/>
            <person name="Mizushima-Sugano J."/>
            <person name="Satoh T."/>
            <person name="Shirai Y."/>
            <person name="Takahashi Y."/>
            <person name="Nakagawa K."/>
            <person name="Okumura K."/>
            <person name="Nagase T."/>
            <person name="Nomura N."/>
            <person name="Kikuchi H."/>
            <person name="Masuho Y."/>
            <person name="Yamashita R."/>
            <person name="Nakai K."/>
            <person name="Yada T."/>
            <person name="Nakamura Y."/>
            <person name="Ohara O."/>
            <person name="Isogai T."/>
            <person name="Sugano S."/>
        </authorList>
    </citation>
    <scope>NUCLEOTIDE SEQUENCE [LARGE SCALE MRNA] (ISOFORMS 1 AND 3)</scope>
    <source>
        <tissue>Kidney epithelium</tissue>
        <tissue>Teratocarcinoma</tissue>
    </source>
</reference>
<reference key="3">
    <citation type="journal article" date="2007" name="BMC Genomics">
        <title>The full-ORF clone resource of the German cDNA consortium.</title>
        <authorList>
            <person name="Bechtel S."/>
            <person name="Rosenfelder H."/>
            <person name="Duda A."/>
            <person name="Schmidt C.P."/>
            <person name="Ernst U."/>
            <person name="Wellenreuther R."/>
            <person name="Mehrle A."/>
            <person name="Schuster C."/>
            <person name="Bahr A."/>
            <person name="Bloecker H."/>
            <person name="Heubner D."/>
            <person name="Hoerlein A."/>
            <person name="Michel G."/>
            <person name="Wedler H."/>
            <person name="Koehrer K."/>
            <person name="Ottenwaelder B."/>
            <person name="Poustka A."/>
            <person name="Wiemann S."/>
            <person name="Schupp I."/>
        </authorList>
    </citation>
    <scope>NUCLEOTIDE SEQUENCE [LARGE SCALE MRNA] (ISOFORM 3)</scope>
    <source>
        <tissue>Brain</tissue>
    </source>
</reference>
<reference key="4">
    <citation type="journal article" date="2004" name="Genome Res.">
        <title>The status, quality, and expansion of the NIH full-length cDNA project: the Mammalian Gene Collection (MGC).</title>
        <authorList>
            <consortium name="The MGC Project Team"/>
        </authorList>
    </citation>
    <scope>NUCLEOTIDE SEQUENCE [LARGE SCALE MRNA] (ISOFORMS 1; 2 AND 3)</scope>
    <source>
        <tissue>Duodenal adenocarcinoma</tissue>
        <tissue>Leukocyte</tissue>
        <tissue>Retinal pigment epithelium</tissue>
        <tissue>Rhabdomyosarcoma</tissue>
    </source>
</reference>
<reference key="5">
    <citation type="submission" date="2004-02" db="EMBL/GenBank/DDBJ databases">
        <authorList>
            <person name="Sales M.M."/>
            <person name="Ferrasi A.C."/>
            <person name="Pereira A.A."/>
            <person name="Pardini M.I.M.C."/>
            <person name="Sogayar M.C."/>
            <person name="Camargo A.A."/>
        </authorList>
    </citation>
    <scope>NUCLEOTIDE SEQUENCE [MRNA] OF 403-557 (ISOFORM 1)</scope>
    <source>
        <tissue>Melanoma</tissue>
    </source>
</reference>
<reference key="6">
    <citation type="journal article" date="2006" name="Hum. Mol. Genet.">
        <title>A novel PtdIns3P and PtdIns(3,5)P2 phosphatase with an inactivating variant in centronuclear myopathy.</title>
        <authorList>
            <person name="Tosch V."/>
            <person name="Rohde H.M."/>
            <person name="Tronchere H."/>
            <person name="Zanoteli E."/>
            <person name="Monroy N."/>
            <person name="Kretz C."/>
            <person name="Dondaine N."/>
            <person name="Payrastre B."/>
            <person name="Mandel J.-L."/>
            <person name="Laporte J."/>
        </authorList>
    </citation>
    <scope>FUNCTION</scope>
    <scope>CATALYTIC ACTIVITY</scope>
    <scope>INVOLVEMENT IN CNM1 AS MODIFIER OF PHENOTYPE</scope>
    <scope>VARIANTS CNM1 GLN-336 AND CYS-462</scope>
    <scope>SUBCELLULAR LOCATION</scope>
    <scope>TISSUE SPECIFICITY</scope>
    <scope>MUTAGENESIS OF CYS-330</scope>
</reference>
<reference key="7">
    <citation type="journal article" date="2008" name="J. Proteome Res.">
        <title>Combining protein-based IMAC, peptide-based IMAC, and MudPIT for efficient phosphoproteomic analysis.</title>
        <authorList>
            <person name="Cantin G.T."/>
            <person name="Yi W."/>
            <person name="Lu B."/>
            <person name="Park S.K."/>
            <person name="Xu T."/>
            <person name="Lee J.-D."/>
            <person name="Yates J.R. III"/>
        </authorList>
    </citation>
    <scope>PHOSPHORYLATION [LARGE SCALE ANALYSIS] AT SER-580</scope>
    <scope>IDENTIFICATION BY MASS SPECTROMETRY [LARGE SCALE ANALYSIS]</scope>
    <source>
        <tissue>Cervix carcinoma</tissue>
    </source>
</reference>
<reference key="8">
    <citation type="journal article" date="2009" name="Sci. Signal.">
        <title>Quantitative phosphoproteomic analysis of T cell receptor signaling reveals system-wide modulation of protein-protein interactions.</title>
        <authorList>
            <person name="Mayya V."/>
            <person name="Lundgren D.H."/>
            <person name="Hwang S.-I."/>
            <person name="Rezaul K."/>
            <person name="Wu L."/>
            <person name="Eng J.K."/>
            <person name="Rodionov V."/>
            <person name="Han D.K."/>
        </authorList>
    </citation>
    <scope>IDENTIFICATION BY MASS SPECTROMETRY [LARGE SCALE ANALYSIS]</scope>
    <source>
        <tissue>Leukemic T-cell</tissue>
    </source>
</reference>
<reference key="9">
    <citation type="journal article" date="2009" name="Science">
        <title>Lysine acetylation targets protein complexes and co-regulates major cellular functions.</title>
        <authorList>
            <person name="Choudhary C."/>
            <person name="Kumar C."/>
            <person name="Gnad F."/>
            <person name="Nielsen M.L."/>
            <person name="Rehman M."/>
            <person name="Walther T.C."/>
            <person name="Olsen J.V."/>
            <person name="Mann M."/>
        </authorList>
    </citation>
    <scope>ACETYLATION [LARGE SCALE ANALYSIS] AT LYS-194</scope>
    <scope>IDENTIFICATION BY MASS SPECTROMETRY [LARGE SCALE ANALYSIS]</scope>
</reference>
<reference key="10">
    <citation type="journal article" date="2010" name="Sci. Signal.">
        <title>Quantitative phosphoproteomics reveals widespread full phosphorylation site occupancy during mitosis.</title>
        <authorList>
            <person name="Olsen J.V."/>
            <person name="Vermeulen M."/>
            <person name="Santamaria A."/>
            <person name="Kumar C."/>
            <person name="Miller M.L."/>
            <person name="Jensen L.J."/>
            <person name="Gnad F."/>
            <person name="Cox J."/>
            <person name="Jensen T.S."/>
            <person name="Nigg E.A."/>
            <person name="Brunak S."/>
            <person name="Mann M."/>
        </authorList>
    </citation>
    <scope>IDENTIFICATION BY MASS SPECTROMETRY [LARGE SCALE ANALYSIS]</scope>
    <source>
        <tissue>Cervix carcinoma</tissue>
    </source>
</reference>
<reference key="11">
    <citation type="journal article" date="2013" name="J. Proteome Res.">
        <title>Toward a comprehensive characterization of a human cancer cell phosphoproteome.</title>
        <authorList>
            <person name="Zhou H."/>
            <person name="Di Palma S."/>
            <person name="Preisinger C."/>
            <person name="Peng M."/>
            <person name="Polat A.N."/>
            <person name="Heck A.J."/>
            <person name="Mohammed S."/>
        </authorList>
    </citation>
    <scope>PHOSPHORYLATION [LARGE SCALE ANALYSIS] AT SER-518; SER-530 AND SER-624</scope>
    <scope>IDENTIFICATION BY MASS SPECTROMETRY [LARGE SCALE ANALYSIS]</scope>
    <source>
        <tissue>Cervix carcinoma</tissue>
        <tissue>Erythroleukemia</tissue>
    </source>
</reference>
<reference key="12">
    <citation type="journal article" date="2014" name="J. Proteomics">
        <title>An enzyme assisted RP-RPLC approach for in-depth analysis of human liver phosphoproteome.</title>
        <authorList>
            <person name="Bian Y."/>
            <person name="Song C."/>
            <person name="Cheng K."/>
            <person name="Dong M."/>
            <person name="Wang F."/>
            <person name="Huang J."/>
            <person name="Sun D."/>
            <person name="Wang L."/>
            <person name="Ye M."/>
            <person name="Zou H."/>
        </authorList>
    </citation>
    <scope>IDENTIFICATION BY MASS SPECTROMETRY [LARGE SCALE ANALYSIS]</scope>
    <source>
        <tissue>Liver</tissue>
    </source>
</reference>
<reference key="13">
    <citation type="journal article" date="2014" name="Mol. Cell. Proteomics">
        <title>Immunoaffinity enrichment and mass spectrometry analysis of protein methylation.</title>
        <authorList>
            <person name="Guo A."/>
            <person name="Gu H."/>
            <person name="Zhou J."/>
            <person name="Mulhern D."/>
            <person name="Wang Y."/>
            <person name="Lee K.A."/>
            <person name="Yang V."/>
            <person name="Aguiar M."/>
            <person name="Kornhauser J."/>
            <person name="Jia X."/>
            <person name="Ren J."/>
            <person name="Beausoleil S.A."/>
            <person name="Silva J.C."/>
            <person name="Vemulapalli V."/>
            <person name="Bedford M.T."/>
            <person name="Comb M.J."/>
        </authorList>
    </citation>
    <scope>METHYLATION [LARGE SCALE ANALYSIS] AT ARG-638</scope>
    <scope>IDENTIFICATION BY MASS SPECTROMETRY [LARGE SCALE ANALYSIS]</scope>
    <source>
        <tissue>Colon carcinoma</tissue>
    </source>
</reference>
<feature type="chain" id="PRO_0000260214" description="Phosphatidylinositol-3,5-bisphosphate 3-phosphatase MTMR14">
    <location>
        <begin position="1"/>
        <end position="650"/>
    </location>
</feature>
<feature type="region of interest" description="Disordered" evidence="3">
    <location>
        <begin position="1"/>
        <end position="27"/>
    </location>
</feature>
<feature type="region of interest" description="Disordered" evidence="3">
    <location>
        <begin position="476"/>
        <end position="546"/>
    </location>
</feature>
<feature type="active site" description="Phosphocysteine intermediate" evidence="1">
    <location>
        <position position="330"/>
    </location>
</feature>
<feature type="binding site" evidence="1">
    <location>
        <position position="333"/>
    </location>
    <ligand>
        <name>a 1,2-diacyl-sn-glycero-3-phospho-(1D-myo-inositol-3,5-bisphosphate)</name>
        <dbReference type="ChEBI" id="CHEBI:57923"/>
    </ligand>
</feature>
<feature type="binding site" evidence="1">
    <location>
        <position position="333"/>
    </location>
    <ligand>
        <name>a 1,2-diacyl-sn-glycero-3-phospho-(1D-myo-inositol-3-phosphate)</name>
        <dbReference type="ChEBI" id="CHEBI:58088"/>
    </ligand>
</feature>
<feature type="binding site" evidence="1">
    <location>
        <position position="334"/>
    </location>
    <ligand>
        <name>a 1,2-diacyl-sn-glycero-3-phospho-(1D-myo-inositol-3,5-bisphosphate)</name>
        <dbReference type="ChEBI" id="CHEBI:57923"/>
    </ligand>
</feature>
<feature type="binding site" evidence="1">
    <location>
        <position position="334"/>
    </location>
    <ligand>
        <name>a 1,2-diacyl-sn-glycero-3-phospho-(1D-myo-inositol-3-phosphate)</name>
        <dbReference type="ChEBI" id="CHEBI:58088"/>
    </ligand>
</feature>
<feature type="binding site" evidence="1">
    <location>
        <position position="335"/>
    </location>
    <ligand>
        <name>a 1,2-diacyl-sn-glycero-3-phospho-(1D-myo-inositol-3,5-bisphosphate)</name>
        <dbReference type="ChEBI" id="CHEBI:57923"/>
    </ligand>
</feature>
<feature type="binding site" evidence="1">
    <location>
        <position position="335"/>
    </location>
    <ligand>
        <name>a 1,2-diacyl-sn-glycero-3-phospho-(1D-myo-inositol-3-phosphate)</name>
        <dbReference type="ChEBI" id="CHEBI:58088"/>
    </ligand>
</feature>
<feature type="binding site" evidence="1">
    <location>
        <position position="336"/>
    </location>
    <ligand>
        <name>a 1,2-diacyl-sn-glycero-3-phospho-(1D-myo-inositol-3,5-bisphosphate)</name>
        <dbReference type="ChEBI" id="CHEBI:57923"/>
    </ligand>
</feature>
<feature type="binding site" evidence="1">
    <location>
        <position position="336"/>
    </location>
    <ligand>
        <name>a 1,2-diacyl-sn-glycero-3-phospho-(1D-myo-inositol-3-phosphate)</name>
        <dbReference type="ChEBI" id="CHEBI:58088"/>
    </ligand>
</feature>
<feature type="binding site" evidence="1">
    <location>
        <position position="382"/>
    </location>
    <ligand>
        <name>a 1,2-diacyl-sn-glycero-3-phospho-(1D-myo-inositol-3,5-bisphosphate)</name>
        <dbReference type="ChEBI" id="CHEBI:57923"/>
    </ligand>
</feature>
<feature type="binding site" evidence="1">
    <location>
        <position position="382"/>
    </location>
    <ligand>
        <name>a 1,2-diacyl-sn-glycero-3-phospho-(1D-myo-inositol-3-phosphate)</name>
        <dbReference type="ChEBI" id="CHEBI:58088"/>
    </ligand>
</feature>
<feature type="modified residue" description="N6-acetyllysine" evidence="14">
    <location>
        <position position="194"/>
    </location>
</feature>
<feature type="modified residue" description="Phosphoserine" evidence="15">
    <location>
        <position position="518"/>
    </location>
</feature>
<feature type="modified residue" description="Phosphoserine" evidence="15">
    <location>
        <position position="530"/>
    </location>
</feature>
<feature type="modified residue" description="Phosphoserine" evidence="13">
    <location>
        <position position="580"/>
    </location>
</feature>
<feature type="modified residue" description="Phosphoserine" evidence="15">
    <location>
        <position position="624"/>
    </location>
</feature>
<feature type="modified residue" description="Omega-N-methylarginine" evidence="16">
    <location>
        <position position="638"/>
    </location>
</feature>
<feature type="glycosylation site" description="N-linked (GlcNAc...) asparagine" evidence="2">
    <location>
        <position position="226"/>
    </location>
</feature>
<feature type="glycosylation site" description="N-linked (GlcNAc...) asparagine" evidence="2">
    <location>
        <position position="519"/>
    </location>
</feature>
<feature type="splice variant" id="VSP_021585" description="In isoform 3." evidence="5 6 8">
    <location>
        <begin position="479"/>
        <end position="538"/>
    </location>
</feature>
<feature type="splice variant" id="VSP_021586" description="In isoform 2 and isoform 3." evidence="5 6 8 9">
    <location>
        <begin position="539"/>
        <end position="590"/>
    </location>
</feature>
<feature type="sequence variant" id="VAR_033370" description="In CNM1; may act as a phenotype modifier; decreased phosphatidylinositol-3-phosphate phosphatase activity; dbSNP:rs121434509." evidence="4">
    <original>R</original>
    <variation>Q</variation>
    <location>
        <position position="336"/>
    </location>
</feature>
<feature type="sequence variant" id="VAR_033371" description="In CNM1; may act as a disease modifier; mutation found in a patient also carrying mutation Lys-368 in DNM2; decreased phosphatidylinositol-3-phosphate phosphatase activity; mild decrease; dbSNP:rs121434510." evidence="4">
    <original>Y</original>
    <variation>C</variation>
    <location>
        <position position="462"/>
    </location>
</feature>
<feature type="mutagenesis site" description="Decreased phosphatidylinositol-3-phosphate phosphatase activity." evidence="4">
    <original>C</original>
    <variation>S</variation>
    <location>
        <position position="330"/>
    </location>
</feature>
<feature type="sequence conflict" description="In Ref. 3; CAL38187." evidence="10" ref="3">
    <original>G</original>
    <variation>R</variation>
    <location>
        <position position="28"/>
    </location>
</feature>
<feature type="sequence conflict" description="In Ref. 3; CAL37928." evidence="10" ref="3">
    <original>E</original>
    <variation>G</variation>
    <location>
        <position position="55"/>
    </location>
</feature>
<feature type="sequence conflict" description="In Ref. 3; CAL38187." evidence="10" ref="3">
    <original>R</original>
    <variation>G</variation>
    <location>
        <position position="126"/>
    </location>
</feature>
<feature type="sequence conflict" description="In Ref. 2; BAC11211." evidence="10" ref="2">
    <original>F</original>
    <variation>S</variation>
    <location>
        <position position="390"/>
    </location>
</feature>
<feature type="sequence conflict" description="In Ref. 5; AAS50151." evidence="10" ref="5">
    <original>EEFS</original>
    <variation>ALFA</variation>
    <location>
        <begin position="403"/>
        <end position="406"/>
    </location>
</feature>
<feature type="sequence conflict" description="In Ref. 5; AAS50151." evidence="10" ref="5">
    <original>GSWQ</original>
    <variation>AAGM</variation>
    <location>
        <begin position="554"/>
        <end position="557"/>
    </location>
</feature>
<feature type="sequence conflict" description="In Ref. 3; CAL37928." evidence="10" ref="3">
    <original>S</original>
    <variation>N</variation>
    <location>
        <position position="646"/>
    </location>
</feature>
<name>MTMRE_HUMAN</name>